<accession>Q9ZPZ1</accession>
<proteinExistence type="uncertain"/>
<name>GAUT2_ARATH</name>
<organism>
    <name type="scientific">Arabidopsis thaliana</name>
    <name type="common">Mouse-ear cress</name>
    <dbReference type="NCBI Taxonomy" id="3702"/>
    <lineage>
        <taxon>Eukaryota</taxon>
        <taxon>Viridiplantae</taxon>
        <taxon>Streptophyta</taxon>
        <taxon>Embryophyta</taxon>
        <taxon>Tracheophyta</taxon>
        <taxon>Spermatophyta</taxon>
        <taxon>Magnoliopsida</taxon>
        <taxon>eudicotyledons</taxon>
        <taxon>Gunneridae</taxon>
        <taxon>Pentapetalae</taxon>
        <taxon>rosids</taxon>
        <taxon>malvids</taxon>
        <taxon>Brassicales</taxon>
        <taxon>Brassicaceae</taxon>
        <taxon>Camelineae</taxon>
        <taxon>Arabidopsis</taxon>
    </lineage>
</organism>
<evidence type="ECO:0000250" key="1"/>
<evidence type="ECO:0000305" key="2"/>
<dbReference type="EC" id="2.4.1.-"/>
<dbReference type="EMBL" id="AC006418">
    <property type="protein sequence ID" value="AAD20159.1"/>
    <property type="molecule type" value="Genomic_DNA"/>
</dbReference>
<dbReference type="EMBL" id="AC006526">
    <property type="protein sequence ID" value="AAM15263.1"/>
    <property type="molecule type" value="Genomic_DNA"/>
</dbReference>
<dbReference type="EMBL" id="CP002685">
    <property type="protein sequence ID" value="AEC10703.1"/>
    <property type="molecule type" value="Genomic_DNA"/>
</dbReference>
<dbReference type="PIR" id="D84903">
    <property type="entry name" value="D84903"/>
</dbReference>
<dbReference type="RefSeq" id="NP_182171.1">
    <property type="nucleotide sequence ID" value="NM_130212.3"/>
</dbReference>
<dbReference type="SMR" id="Q9ZPZ1"/>
<dbReference type="FunCoup" id="Q9ZPZ1">
    <property type="interactions" value="136"/>
</dbReference>
<dbReference type="STRING" id="3702.Q9ZPZ1"/>
<dbReference type="CAZy" id="GT8">
    <property type="family name" value="Glycosyltransferase Family 8"/>
</dbReference>
<dbReference type="iPTMnet" id="Q9ZPZ1"/>
<dbReference type="PaxDb" id="3702-AT2G46480.1"/>
<dbReference type="EnsemblPlants" id="AT2G46480.1">
    <property type="protein sequence ID" value="AT2G46480.1"/>
    <property type="gene ID" value="AT2G46480"/>
</dbReference>
<dbReference type="GeneID" id="819257"/>
<dbReference type="Gramene" id="AT2G46480.1">
    <property type="protein sequence ID" value="AT2G46480.1"/>
    <property type="gene ID" value="AT2G46480"/>
</dbReference>
<dbReference type="KEGG" id="ath:AT2G46480"/>
<dbReference type="Araport" id="AT2G46480"/>
<dbReference type="TAIR" id="AT2G46480">
    <property type="gene designation" value="GAUT2"/>
</dbReference>
<dbReference type="eggNOG" id="ENOG502QSDQ">
    <property type="taxonomic scope" value="Eukaryota"/>
</dbReference>
<dbReference type="HOGENOM" id="CLU_010770_2_0_1"/>
<dbReference type="InParanoid" id="Q9ZPZ1"/>
<dbReference type="PhylomeDB" id="Q9ZPZ1"/>
<dbReference type="UniPathway" id="UPA00845"/>
<dbReference type="Proteomes" id="UP000006548">
    <property type="component" value="Chromosome 2"/>
</dbReference>
<dbReference type="ExpressionAtlas" id="Q9ZPZ1">
    <property type="expression patterns" value="baseline and differential"/>
</dbReference>
<dbReference type="GO" id="GO:0047262">
    <property type="term" value="F:polygalacturonate 4-alpha-galacturonosyltransferase activity"/>
    <property type="evidence" value="ECO:0000250"/>
    <property type="project" value="TAIR"/>
</dbReference>
<dbReference type="GO" id="GO:0071555">
    <property type="term" value="P:cell wall organization"/>
    <property type="evidence" value="ECO:0007669"/>
    <property type="project" value="UniProtKB-KW"/>
</dbReference>
<dbReference type="GO" id="GO:0045489">
    <property type="term" value="P:pectin biosynthetic process"/>
    <property type="evidence" value="ECO:0007669"/>
    <property type="project" value="UniProtKB-UniPathway"/>
</dbReference>
<dbReference type="CDD" id="cd06429">
    <property type="entry name" value="GT8_like_1"/>
    <property type="match status" value="1"/>
</dbReference>
<dbReference type="Gene3D" id="3.90.550.10">
    <property type="entry name" value="Spore Coat Polysaccharide Biosynthesis Protein SpsA, Chain A"/>
    <property type="match status" value="1"/>
</dbReference>
<dbReference type="InterPro" id="IPR029993">
    <property type="entry name" value="GAUT"/>
</dbReference>
<dbReference type="InterPro" id="IPR002495">
    <property type="entry name" value="Glyco_trans_8"/>
</dbReference>
<dbReference type="InterPro" id="IPR029044">
    <property type="entry name" value="Nucleotide-diphossugar_trans"/>
</dbReference>
<dbReference type="PANTHER" id="PTHR32116:SF58">
    <property type="entry name" value="GALACTURONOSYLTRANSFERASE 2-RELATED"/>
    <property type="match status" value="1"/>
</dbReference>
<dbReference type="PANTHER" id="PTHR32116">
    <property type="entry name" value="GALACTURONOSYLTRANSFERASE 4-RELATED"/>
    <property type="match status" value="1"/>
</dbReference>
<dbReference type="Pfam" id="PF01501">
    <property type="entry name" value="Glyco_transf_8"/>
    <property type="match status" value="1"/>
</dbReference>
<dbReference type="SUPFAM" id="SSF53448">
    <property type="entry name" value="Nucleotide-diphospho-sugar transferases"/>
    <property type="match status" value="1"/>
</dbReference>
<protein>
    <recommendedName>
        <fullName>Putative galacturonosyltransferase 2</fullName>
        <ecNumber>2.4.1.-</ecNumber>
    </recommendedName>
    <alternativeName>
        <fullName>Like glycosyl transferase 2</fullName>
    </alternativeName>
</protein>
<reference key="1">
    <citation type="journal article" date="1999" name="Nature">
        <title>Sequence and analysis of chromosome 2 of the plant Arabidopsis thaliana.</title>
        <authorList>
            <person name="Lin X."/>
            <person name="Kaul S."/>
            <person name="Rounsley S.D."/>
            <person name="Shea T.P."/>
            <person name="Benito M.-I."/>
            <person name="Town C.D."/>
            <person name="Fujii C.Y."/>
            <person name="Mason T.M."/>
            <person name="Bowman C.L."/>
            <person name="Barnstead M.E."/>
            <person name="Feldblyum T.V."/>
            <person name="Buell C.R."/>
            <person name="Ketchum K.A."/>
            <person name="Lee J.J."/>
            <person name="Ronning C.M."/>
            <person name="Koo H.L."/>
            <person name="Moffat K.S."/>
            <person name="Cronin L.A."/>
            <person name="Shen M."/>
            <person name="Pai G."/>
            <person name="Van Aken S."/>
            <person name="Umayam L."/>
            <person name="Tallon L.J."/>
            <person name="Gill J.E."/>
            <person name="Adams M.D."/>
            <person name="Carrera A.J."/>
            <person name="Creasy T.H."/>
            <person name="Goodman H.M."/>
            <person name="Somerville C.R."/>
            <person name="Copenhaver G.P."/>
            <person name="Preuss D."/>
            <person name="Nierman W.C."/>
            <person name="White O."/>
            <person name="Eisen J.A."/>
            <person name="Salzberg S.L."/>
            <person name="Fraser C.M."/>
            <person name="Venter J.C."/>
        </authorList>
    </citation>
    <scope>NUCLEOTIDE SEQUENCE [LARGE SCALE GENOMIC DNA]</scope>
    <source>
        <strain>cv. Columbia</strain>
    </source>
</reference>
<reference key="2">
    <citation type="journal article" date="2017" name="Plant J.">
        <title>Araport11: a complete reannotation of the Arabidopsis thaliana reference genome.</title>
        <authorList>
            <person name="Cheng C.Y."/>
            <person name="Krishnakumar V."/>
            <person name="Chan A.P."/>
            <person name="Thibaud-Nissen F."/>
            <person name="Schobel S."/>
            <person name="Town C.D."/>
        </authorList>
    </citation>
    <scope>GENOME REANNOTATION</scope>
    <source>
        <strain>cv. Columbia</strain>
    </source>
</reference>
<reference key="3">
    <citation type="journal article" date="2000" name="Plant Mol. Biol.">
        <title>Organization and structural evolution of four multigene families in Arabidopsis thaliana: AtLCAD, AtLGT, AtMYST and AtHD-GL2.</title>
        <authorList>
            <person name="Tavares R."/>
            <person name="Aubourg S."/>
            <person name="Lecharny A."/>
            <person name="Kreis M."/>
        </authorList>
    </citation>
    <scope>GENE FAMILY</scope>
    <scope>NOMENCLATURE</scope>
</reference>
<reference key="4">
    <citation type="journal article" date="2006" name="Proc. Natl. Acad. Sci. U.S.A.">
        <title>Functional identification of an Arabidopsis pectin biosynthetic homogalacturonan galacturonosyltransferase.</title>
        <authorList>
            <person name="Sterling J.D."/>
            <person name="Atmodjo M.A."/>
            <person name="Inwood S.E."/>
            <person name="Kumar Kolli V.S."/>
            <person name="Quigley H.F."/>
            <person name="Hahn M.G."/>
            <person name="Mohnen D."/>
        </authorList>
    </citation>
    <scope>GENE FAMILY</scope>
    <scope>NOMENCLATURE</scope>
</reference>
<reference key="5">
    <citation type="journal article" date="2009" name="Mol. Plant">
        <title>Arabidopsis thaliana T-DNA mutants implicate GAUT genes in the biosynthesis of pectin and xylan in cell walls and seed testa.</title>
        <authorList>
            <person name="Caffall K.H."/>
            <person name="Pattathil S."/>
            <person name="Phillips S.E."/>
            <person name="Hahn M.G."/>
            <person name="Mohnen D."/>
        </authorList>
    </citation>
    <scope>GENE FAMILY</scope>
    <scope>NOMENCLATURE</scope>
</reference>
<gene>
    <name type="primary">GAUT2</name>
    <name type="synonym">LGT2</name>
    <name type="ordered locus">At2g46480</name>
    <name type="ORF">F13A10.1</name>
</gene>
<comment type="function">
    <text evidence="1">May be involved in pectin and/or xylans biosynthesis in cell walls.</text>
</comment>
<comment type="pathway">
    <text>Glycan metabolism; pectin biosynthesis.</text>
</comment>
<comment type="miscellaneous">
    <text>Expression not detected in roots, inflorescences, siliques, leaves or stems. The signal-anchor present in all the other members of the family is missing.</text>
</comment>
<comment type="similarity">
    <text evidence="2">Belongs to the glycosyltransferase 8 family.</text>
</comment>
<comment type="caution">
    <text evidence="2">Could be the product of a pseudogene.</text>
</comment>
<feature type="chain" id="PRO_0000392555" description="Putative galacturonosyltransferase 2">
    <location>
        <begin position="1"/>
        <end position="528"/>
    </location>
</feature>
<sequence>MTDACCLKGNEDKMVPRFGHGTWIGKAFNDTPEMLHERSLRQEKRLERANELMNDDSLQKLETAAMARSRSVDSAPLGNYTIWKNEYRRGKSFEDMLRLMQDQIIMARVYSGLAKFTNNLALHQEIETQLMKLAWEEESTDIDQEQRVLDSIRDMGQILARAHEQLYECKLVTNKLRAMLQTVEDELENEQTYITFLTQLASKALPDAIHCLTMRLNLEYHLLPLPMRNFPRRENLENPKLYHYALFSDNVLAASVVVNSTVMNAQDPSRHVFHLVTDKLNFGAMSMWFLLNPPGEATIHVQRFEDFTWLNSSYSPVLSQLESAAMKKFYFKTARSESVESGSENLKYRYPKYMSMLNHLRFYIPRIFPKLEKILFVDDDVVVQKDLTPLWSIDLKGKVNENFDPKFCGWAYGMNIFDLKEWKKNNITETYHFWQNLNENRTLWKLGTLPPGLITFYNLTQPLQRKWHLLGLGYDKGIDVKKIERSAVIHYNGHMKPWTEMGISKYQPYWTKYTNFDHPYIFTCRLFE</sequence>
<keyword id="KW-0961">Cell wall biogenesis/degradation</keyword>
<keyword id="KW-0328">Glycosyltransferase</keyword>
<keyword id="KW-1185">Reference proteome</keyword>
<keyword id="KW-0808">Transferase</keyword>